<protein>
    <recommendedName>
        <fullName>Uncharacterized mitochondrial protein AtMg00310</fullName>
    </recommendedName>
    <alternativeName>
        <fullName>ORF154</fullName>
    </alternativeName>
</protein>
<organism>
    <name type="scientific">Arabidopsis thaliana</name>
    <name type="common">Mouse-ear cress</name>
    <dbReference type="NCBI Taxonomy" id="3702"/>
    <lineage>
        <taxon>Eukaryota</taxon>
        <taxon>Viridiplantae</taxon>
        <taxon>Streptophyta</taxon>
        <taxon>Embryophyta</taxon>
        <taxon>Tracheophyta</taxon>
        <taxon>Spermatophyta</taxon>
        <taxon>Magnoliopsida</taxon>
        <taxon>eudicotyledons</taxon>
        <taxon>Gunneridae</taxon>
        <taxon>Pentapetalae</taxon>
        <taxon>rosids</taxon>
        <taxon>malvids</taxon>
        <taxon>Brassicales</taxon>
        <taxon>Brassicaceae</taxon>
        <taxon>Camelineae</taxon>
        <taxon>Arabidopsis</taxon>
    </lineage>
</organism>
<sequence length="154" mass="17971">MALPVYAMSCFRLSKLLCKKLTSAMTEFWWSSCENKRKISWVAWQKLCKSKEDDGGLGFRDLGWFNQALLAKQSFRIIHQPHTLLSRLLRSRYFPHSSMMECSVGTRPSYAWRSIIHGRELLSRGLLRTIGDGIHTKVWLDRWIMDETPLPPLN</sequence>
<reference key="1">
    <citation type="journal article" date="1997" name="Nat. Genet.">
        <title>The mitochondrial genome of Arabidopsis thaliana contains 57 genes in 366,924 nucleotides.</title>
        <authorList>
            <person name="Unseld M."/>
            <person name="Marienfeld J.R."/>
            <person name="Brandt P."/>
            <person name="Brennicke A."/>
        </authorList>
    </citation>
    <scope>NUCLEOTIDE SEQUENCE [LARGE SCALE GENOMIC DNA]</scope>
    <source>
        <strain>cv. C24</strain>
    </source>
</reference>
<reference key="2">
    <citation type="journal article" date="2018" name="Plant Cell">
        <title>Correction of persistent errors in Arabidopsis reference mitochondrial genomes.</title>
        <authorList>
            <person name="Sloan D.B."/>
            <person name="Wu Z."/>
            <person name="Sharbrough J."/>
        </authorList>
    </citation>
    <scope>NUCLEOTIDE SEQUENCE [LARGE SCALE GENOMIC DNA]</scope>
    <source>
        <strain>cv. Columbia</strain>
    </source>
</reference>
<reference key="3">
    <citation type="journal article" date="1999" name="Nature">
        <title>Sequence and analysis of chromosome 2 of the plant Arabidopsis thaliana.</title>
        <authorList>
            <person name="Lin X."/>
            <person name="Kaul S."/>
            <person name="Rounsley S.D."/>
            <person name="Shea T.P."/>
            <person name="Benito M.-I."/>
            <person name="Town C.D."/>
            <person name="Fujii C.Y."/>
            <person name="Mason T.M."/>
            <person name="Bowman C.L."/>
            <person name="Barnstead M.E."/>
            <person name="Feldblyum T.V."/>
            <person name="Buell C.R."/>
            <person name="Ketchum K.A."/>
            <person name="Lee J.J."/>
            <person name="Ronning C.M."/>
            <person name="Koo H.L."/>
            <person name="Moffat K.S."/>
            <person name="Cronin L.A."/>
            <person name="Shen M."/>
            <person name="Pai G."/>
            <person name="Van Aken S."/>
            <person name="Umayam L."/>
            <person name="Tallon L.J."/>
            <person name="Gill J.E."/>
            <person name="Adams M.D."/>
            <person name="Carrera A.J."/>
            <person name="Creasy T.H."/>
            <person name="Goodman H.M."/>
            <person name="Somerville C.R."/>
            <person name="Copenhaver G.P."/>
            <person name="Preuss D."/>
            <person name="Nierman W.C."/>
            <person name="White O."/>
            <person name="Eisen J.A."/>
            <person name="Salzberg S.L."/>
            <person name="Fraser C.M."/>
            <person name="Venter J.C."/>
        </authorList>
    </citation>
    <scope>NUCLEOTIDE SEQUENCE [LARGE SCALE GENOMIC DNA] (AT2G07737)</scope>
    <source>
        <strain>cv. Columbia</strain>
    </source>
</reference>
<reference key="4">
    <citation type="journal article" date="2017" name="Plant J.">
        <title>Araport11: a complete reannotation of the Arabidopsis thaliana reference genome.</title>
        <authorList>
            <person name="Cheng C.Y."/>
            <person name="Krishnakumar V."/>
            <person name="Chan A.P."/>
            <person name="Thibaud-Nissen F."/>
            <person name="Schobel S."/>
            <person name="Town C.D."/>
        </authorList>
    </citation>
    <scope>GENOME REANNOTATION (AT2G07737)</scope>
    <source>
        <strain>cv. Columbia</strain>
    </source>
</reference>
<feature type="chain" id="PRO_0000196765" description="Uncharacterized mitochondrial protein AtMg00310">
    <location>
        <begin position="1"/>
        <end position="154"/>
    </location>
</feature>
<geneLocation type="mitochondrion"/>
<accession>P93295</accession>
<name>M310_ARATH</name>
<gene>
    <name evidence="3" type="ordered locus">AtMg00310</name>
</gene>
<gene>
    <name evidence="2" type="ordered locus">At2g07737</name>
</gene>
<proteinExistence type="predicted"/>
<comment type="subcellular location">
    <subcellularLocation>
        <location evidence="1">Mitochondrion</location>
    </subcellularLocation>
</comment>
<comment type="miscellaneous">
    <text>A stretch of 270 kb of the mitochondrial genome is duplicated within the centromere of chromosome 2 resulting in the duplication of the gene. The expression of the duplicated gene (At2g07737) is not demonstrated.</text>
</comment>
<evidence type="ECO:0000305" key="1"/>
<evidence type="ECO:0000312" key="2">
    <source>
        <dbReference type="Araport" id="AT2G07737"/>
    </source>
</evidence>
<evidence type="ECO:0000312" key="3">
    <source>
        <dbReference type="Araport" id="ATMG00310"/>
    </source>
</evidence>
<keyword id="KW-0496">Mitochondrion</keyword>
<keyword id="KW-1185">Reference proteome</keyword>
<dbReference type="EMBL" id="Y08501">
    <property type="protein sequence ID" value="CAA69775.1"/>
    <property type="molecule type" value="Genomic_DNA"/>
</dbReference>
<dbReference type="EMBL" id="BK010421">
    <property type="status" value="NOT_ANNOTATED_CDS"/>
    <property type="molecule type" value="Genomic_DNA"/>
</dbReference>
<dbReference type="EMBL" id="AC006225">
    <property type="status" value="NOT_ANNOTATED_CDS"/>
    <property type="molecule type" value="Genomic_DNA"/>
</dbReference>
<dbReference type="EMBL" id="CP002685">
    <property type="status" value="NOT_ANNOTATED_CDS"/>
    <property type="molecule type" value="Genomic_DNA"/>
</dbReference>
<dbReference type="RefSeq" id="NP_085499.1">
    <property type="nucleotide sequence ID" value="NC_001284.2"/>
</dbReference>
<dbReference type="STRING" id="3702.P93295"/>
<dbReference type="PaxDb" id="3702-ATMG00310.1"/>
<dbReference type="EnsemblPlants" id="ATMG00310.1">
    <property type="protein sequence ID" value="ATMG00310.1"/>
    <property type="gene ID" value="ATMG00310"/>
</dbReference>
<dbReference type="Gramene" id="ATMG00310.1">
    <property type="protein sequence ID" value="ATMG00310.1"/>
    <property type="gene ID" value="ATMG00310"/>
</dbReference>
<dbReference type="Araport" id="AT2G07737"/>
<dbReference type="Araport" id="ATMG00310"/>
<dbReference type="TAIR" id="AT2G07737"/>
<dbReference type="TAIR" id="ATMG00310">
    <property type="gene designation" value="ORF154"/>
</dbReference>
<dbReference type="eggNOG" id="KOG1075">
    <property type="taxonomic scope" value="Eukaryota"/>
</dbReference>
<dbReference type="HOGENOM" id="CLU_000680_15_1_1"/>
<dbReference type="InParanoid" id="P93295"/>
<dbReference type="OMA" id="EMINIWE"/>
<dbReference type="Proteomes" id="UP000006548">
    <property type="component" value="Chromosome 2"/>
</dbReference>
<dbReference type="Proteomes" id="UP000006548">
    <property type="component" value="Mitochondrion MT"/>
</dbReference>
<dbReference type="ExpressionAtlas" id="P93295">
    <property type="expression patterns" value="baseline and differential"/>
</dbReference>
<dbReference type="GO" id="GO:0005739">
    <property type="term" value="C:mitochondrion"/>
    <property type="evidence" value="ECO:0007669"/>
    <property type="project" value="UniProtKB-SubCell"/>
</dbReference>
<dbReference type="PANTHER" id="PTHR33116:SF86">
    <property type="entry name" value="REVERSE TRANSCRIPTASE DOMAIN-CONTAINING PROTEIN"/>
    <property type="match status" value="1"/>
</dbReference>
<dbReference type="PANTHER" id="PTHR33116">
    <property type="entry name" value="REVERSE TRANSCRIPTASE ZINC-BINDING DOMAIN-CONTAINING PROTEIN-RELATED-RELATED"/>
    <property type="match status" value="1"/>
</dbReference>